<feature type="chain" id="PRO_0000263602" description="Small ribosomal subunit protein uS12">
    <location>
        <begin position="1"/>
        <end position="124"/>
    </location>
</feature>
<feature type="modified residue" description="3-methylthioaspartic acid" evidence="1">
    <location>
        <position position="89"/>
    </location>
</feature>
<gene>
    <name evidence="2" type="primary">rpsL</name>
    <name type="ordered locus">YPA_3272</name>
</gene>
<comment type="function">
    <text evidence="2">With S4 and S5 plays an important role in translational accuracy.</text>
</comment>
<comment type="function">
    <text evidence="2">Interacts with and stabilizes bases of the 16S rRNA that are involved in tRNA selection in the A site and with the mRNA backbone. Located at the interface of the 30S and 50S subunits, it traverses the body of the 30S subunit contacting proteins on the other side and probably holding the rRNA structure together. The combined cluster of proteins S8, S12 and S17 appears to hold together the shoulder and platform of the 30S subunit.</text>
</comment>
<comment type="subunit">
    <text evidence="2">Part of the 30S ribosomal subunit. Contacts proteins S8 and S17. May interact with IF1 in the 30S initiation complex.</text>
</comment>
<comment type="similarity">
    <text evidence="2">Belongs to the universal ribosomal protein uS12 family.</text>
</comment>
<organism>
    <name type="scientific">Yersinia pestis bv. Antiqua (strain Antiqua)</name>
    <dbReference type="NCBI Taxonomy" id="360102"/>
    <lineage>
        <taxon>Bacteria</taxon>
        <taxon>Pseudomonadati</taxon>
        <taxon>Pseudomonadota</taxon>
        <taxon>Gammaproteobacteria</taxon>
        <taxon>Enterobacterales</taxon>
        <taxon>Yersiniaceae</taxon>
        <taxon>Yersinia</taxon>
    </lineage>
</organism>
<proteinExistence type="inferred from homology"/>
<name>RS12_YERPA</name>
<sequence>MATINQLVRKPRSMKVAKSNVPALEACPQKRGVCTRVYTTTPKKPNSALRKVCRVRLTNGFEVTSYIGGEGHNLQEHSVILIRGGRVKDLPGVRYHTVRGALDCSGVKDRKQSRSKYGVKKPKA</sequence>
<keyword id="KW-0488">Methylation</keyword>
<keyword id="KW-0687">Ribonucleoprotein</keyword>
<keyword id="KW-0689">Ribosomal protein</keyword>
<keyword id="KW-0694">RNA-binding</keyword>
<keyword id="KW-0699">rRNA-binding</keyword>
<keyword id="KW-0820">tRNA-binding</keyword>
<reference key="1">
    <citation type="journal article" date="2006" name="J. Bacteriol.">
        <title>Complete genome sequence of Yersinia pestis strains Antiqua and Nepal516: evidence of gene reduction in an emerging pathogen.</title>
        <authorList>
            <person name="Chain P.S.G."/>
            <person name="Hu P."/>
            <person name="Malfatti S.A."/>
            <person name="Radnedge L."/>
            <person name="Larimer F."/>
            <person name="Vergez L.M."/>
            <person name="Worsham P."/>
            <person name="Chu M.C."/>
            <person name="Andersen G.L."/>
        </authorList>
    </citation>
    <scope>NUCLEOTIDE SEQUENCE [LARGE SCALE GENOMIC DNA]</scope>
    <source>
        <strain>Antiqua</strain>
    </source>
</reference>
<protein>
    <recommendedName>
        <fullName evidence="2">Small ribosomal subunit protein uS12</fullName>
    </recommendedName>
    <alternativeName>
        <fullName evidence="3">30S ribosomal protein S12</fullName>
    </alternativeName>
</protein>
<evidence type="ECO:0000250" key="1"/>
<evidence type="ECO:0000255" key="2">
    <source>
        <dbReference type="HAMAP-Rule" id="MF_00403"/>
    </source>
</evidence>
<evidence type="ECO:0000305" key="3"/>
<dbReference type="EMBL" id="CP000308">
    <property type="protein sequence ID" value="ABG15234.1"/>
    <property type="molecule type" value="Genomic_DNA"/>
</dbReference>
<dbReference type="RefSeq" id="WP_002212323.1">
    <property type="nucleotide sequence ID" value="NZ_CP009906.1"/>
</dbReference>
<dbReference type="SMR" id="Q1C2T8"/>
<dbReference type="GeneID" id="97454224"/>
<dbReference type="KEGG" id="ypa:YPA_3272"/>
<dbReference type="Proteomes" id="UP000001971">
    <property type="component" value="Chromosome"/>
</dbReference>
<dbReference type="GO" id="GO:0015935">
    <property type="term" value="C:small ribosomal subunit"/>
    <property type="evidence" value="ECO:0007669"/>
    <property type="project" value="InterPro"/>
</dbReference>
<dbReference type="GO" id="GO:0019843">
    <property type="term" value="F:rRNA binding"/>
    <property type="evidence" value="ECO:0007669"/>
    <property type="project" value="UniProtKB-UniRule"/>
</dbReference>
<dbReference type="GO" id="GO:0003735">
    <property type="term" value="F:structural constituent of ribosome"/>
    <property type="evidence" value="ECO:0007669"/>
    <property type="project" value="InterPro"/>
</dbReference>
<dbReference type="GO" id="GO:0000049">
    <property type="term" value="F:tRNA binding"/>
    <property type="evidence" value="ECO:0007669"/>
    <property type="project" value="UniProtKB-UniRule"/>
</dbReference>
<dbReference type="GO" id="GO:0006412">
    <property type="term" value="P:translation"/>
    <property type="evidence" value="ECO:0007669"/>
    <property type="project" value="UniProtKB-UniRule"/>
</dbReference>
<dbReference type="CDD" id="cd03368">
    <property type="entry name" value="Ribosomal_S12"/>
    <property type="match status" value="1"/>
</dbReference>
<dbReference type="FunFam" id="2.40.50.140:FF:000001">
    <property type="entry name" value="30S ribosomal protein S12"/>
    <property type="match status" value="1"/>
</dbReference>
<dbReference type="Gene3D" id="2.40.50.140">
    <property type="entry name" value="Nucleic acid-binding proteins"/>
    <property type="match status" value="1"/>
</dbReference>
<dbReference type="HAMAP" id="MF_00403_B">
    <property type="entry name" value="Ribosomal_uS12_B"/>
    <property type="match status" value="1"/>
</dbReference>
<dbReference type="InterPro" id="IPR012340">
    <property type="entry name" value="NA-bd_OB-fold"/>
</dbReference>
<dbReference type="InterPro" id="IPR006032">
    <property type="entry name" value="Ribosomal_uS12"/>
</dbReference>
<dbReference type="InterPro" id="IPR005679">
    <property type="entry name" value="Ribosomal_uS12_bac"/>
</dbReference>
<dbReference type="NCBIfam" id="TIGR00981">
    <property type="entry name" value="rpsL_bact"/>
    <property type="match status" value="1"/>
</dbReference>
<dbReference type="PANTHER" id="PTHR11652">
    <property type="entry name" value="30S RIBOSOMAL PROTEIN S12 FAMILY MEMBER"/>
    <property type="match status" value="1"/>
</dbReference>
<dbReference type="Pfam" id="PF00164">
    <property type="entry name" value="Ribosom_S12_S23"/>
    <property type="match status" value="1"/>
</dbReference>
<dbReference type="PIRSF" id="PIRSF002133">
    <property type="entry name" value="Ribosomal_S12/S23"/>
    <property type="match status" value="1"/>
</dbReference>
<dbReference type="PRINTS" id="PR01034">
    <property type="entry name" value="RIBOSOMALS12"/>
</dbReference>
<dbReference type="SUPFAM" id="SSF50249">
    <property type="entry name" value="Nucleic acid-binding proteins"/>
    <property type="match status" value="1"/>
</dbReference>
<dbReference type="PROSITE" id="PS00055">
    <property type="entry name" value="RIBOSOMAL_S12"/>
    <property type="match status" value="1"/>
</dbReference>
<accession>Q1C2T8</accession>